<evidence type="ECO:0000255" key="1">
    <source>
        <dbReference type="HAMAP-Rule" id="MF_03169"/>
    </source>
</evidence>
<evidence type="ECO:0000269" key="2">
    <source>
    </source>
</evidence>
<evidence type="ECO:0000269" key="3">
    <source>
    </source>
</evidence>
<evidence type="ECO:0000312" key="4">
    <source>
        <dbReference type="EMBL" id="AAT94473.1"/>
    </source>
</evidence>
<evidence type="ECO:0000312" key="5">
    <source>
        <dbReference type="EMBL" id="BAB44152.1"/>
    </source>
</evidence>
<evidence type="ECO:0000312" key="6">
    <source>
        <dbReference type="FlyBase" id="FBgn0042094"/>
    </source>
</evidence>
<evidence type="ECO:0000312" key="7">
    <source>
        <dbReference type="Proteomes" id="UP000000803"/>
    </source>
</evidence>
<feature type="chain" id="PRO_0000461205" description="GTP:AMP phosphotransferase, mitochondrial">
    <location>
        <begin position="1"/>
        <end position="216"/>
    </location>
</feature>
<feature type="region of interest" description="NMPbind" evidence="1">
    <location>
        <begin position="35"/>
        <end position="64"/>
    </location>
</feature>
<feature type="region of interest" description="LID" evidence="1">
    <location>
        <begin position="125"/>
        <end position="162"/>
    </location>
</feature>
<feature type="binding site" evidence="1">
    <location>
        <begin position="15"/>
        <end position="20"/>
    </location>
    <ligand>
        <name>GTP</name>
        <dbReference type="ChEBI" id="CHEBI:37565"/>
    </ligand>
</feature>
<feature type="binding site" evidence="1">
    <location>
        <position position="36"/>
    </location>
    <ligand>
        <name>AMP</name>
        <dbReference type="ChEBI" id="CHEBI:456215"/>
    </ligand>
</feature>
<feature type="binding site" evidence="1">
    <location>
        <position position="41"/>
    </location>
    <ligand>
        <name>AMP</name>
        <dbReference type="ChEBI" id="CHEBI:456215"/>
    </ligand>
</feature>
<feature type="binding site" evidence="1">
    <location>
        <begin position="62"/>
        <end position="64"/>
    </location>
    <ligand>
        <name>AMP</name>
        <dbReference type="ChEBI" id="CHEBI:456215"/>
    </ligand>
</feature>
<feature type="binding site" evidence="1">
    <location>
        <begin position="89"/>
        <end position="92"/>
    </location>
    <ligand>
        <name>AMP</name>
        <dbReference type="ChEBI" id="CHEBI:456215"/>
    </ligand>
</feature>
<feature type="binding site" evidence="1">
    <location>
        <position position="96"/>
    </location>
    <ligand>
        <name>AMP</name>
        <dbReference type="ChEBI" id="CHEBI:456215"/>
    </ligand>
</feature>
<feature type="binding site" evidence="1">
    <location>
        <position position="126"/>
    </location>
    <ligand>
        <name>GTP</name>
        <dbReference type="ChEBI" id="CHEBI:37565"/>
    </ligand>
</feature>
<feature type="binding site" evidence="1">
    <location>
        <begin position="135"/>
        <end position="136"/>
    </location>
    <ligand>
        <name>GTP</name>
        <dbReference type="ChEBI" id="CHEBI:37565"/>
    </ligand>
</feature>
<feature type="binding site" evidence="1">
    <location>
        <position position="159"/>
    </location>
    <ligand>
        <name>AMP</name>
        <dbReference type="ChEBI" id="CHEBI:456215"/>
    </ligand>
</feature>
<feature type="binding site" evidence="1">
    <location>
        <position position="170"/>
    </location>
    <ligand>
        <name>AMP</name>
        <dbReference type="ChEBI" id="CHEBI:456215"/>
    </ligand>
</feature>
<feature type="binding site" evidence="1">
    <location>
        <position position="199"/>
    </location>
    <ligand>
        <name>GTP</name>
        <dbReference type="ChEBI" id="CHEBI:37565"/>
    </ligand>
</feature>
<sequence>MFTKIFRAVIIGAPGSGKGTISELICKNHGCVHISTGDILRQNIIKNTELGKKAKQYIAEGKLVPDAIVTKTMLARITEVGNRSYILDGFPRNIAQAEALAAREQIDAVITLDVPHSVIIDRVKNRWIHAPSGRVYNIGFKNPKVPGKDDVTGEPLMQREDDKPHVVAKRLELYDEVMSPVIAWYEKKGLVATFKGKQTKEIWPMMELFLNDRINA</sequence>
<name>KAD3_DROME</name>
<reference evidence="5" key="1">
    <citation type="journal article" date="2009" name="Comp. Biochem. Physiol.">
        <title>Adenylate kinase isozyme 2 is essential for growth and development of Drosophila melanogaster.</title>
        <authorList>
            <person name="Fujisawa K."/>
            <person name="Murakami R."/>
            <person name="Horiguchi T."/>
            <person name="Noma T."/>
        </authorList>
    </citation>
    <scope>NUCLEOTIDE SEQUENCE [MRNA]</scope>
    <scope>FUNCTION</scope>
    <scope>CATALYTIC ACTIVITY</scope>
    <scope>TISSUE SPECIFICITY</scope>
    <scope>DEVELOPMENTAL STAGE</scope>
</reference>
<reference evidence="7" key="2">
    <citation type="journal article" date="2000" name="Science">
        <title>The genome sequence of Drosophila melanogaster.</title>
        <authorList>
            <person name="Adams M.D."/>
            <person name="Celniker S.E."/>
            <person name="Holt R.A."/>
            <person name="Evans C.A."/>
            <person name="Gocayne J.D."/>
            <person name="Amanatides P.G."/>
            <person name="Scherer S.E."/>
            <person name="Li P.W."/>
            <person name="Hoskins R.A."/>
            <person name="Galle R.F."/>
            <person name="George R.A."/>
            <person name="Lewis S.E."/>
            <person name="Richards S."/>
            <person name="Ashburner M."/>
            <person name="Henderson S.N."/>
            <person name="Sutton G.G."/>
            <person name="Wortman J.R."/>
            <person name="Yandell M.D."/>
            <person name="Zhang Q."/>
            <person name="Chen L.X."/>
            <person name="Brandon R.C."/>
            <person name="Rogers Y.-H.C."/>
            <person name="Blazej R.G."/>
            <person name="Champe M."/>
            <person name="Pfeiffer B.D."/>
            <person name="Wan K.H."/>
            <person name="Doyle C."/>
            <person name="Baxter E.G."/>
            <person name="Helt G."/>
            <person name="Nelson C.R."/>
            <person name="Miklos G.L.G."/>
            <person name="Abril J.F."/>
            <person name="Agbayani A."/>
            <person name="An H.-J."/>
            <person name="Andrews-Pfannkoch C."/>
            <person name="Baldwin D."/>
            <person name="Ballew R.M."/>
            <person name="Basu A."/>
            <person name="Baxendale J."/>
            <person name="Bayraktaroglu L."/>
            <person name="Beasley E.M."/>
            <person name="Beeson K.Y."/>
            <person name="Benos P.V."/>
            <person name="Berman B.P."/>
            <person name="Bhandari D."/>
            <person name="Bolshakov S."/>
            <person name="Borkova D."/>
            <person name="Botchan M.R."/>
            <person name="Bouck J."/>
            <person name="Brokstein P."/>
            <person name="Brottier P."/>
            <person name="Burtis K.C."/>
            <person name="Busam D.A."/>
            <person name="Butler H."/>
            <person name="Cadieu E."/>
            <person name="Center A."/>
            <person name="Chandra I."/>
            <person name="Cherry J.M."/>
            <person name="Cawley S."/>
            <person name="Dahlke C."/>
            <person name="Davenport L.B."/>
            <person name="Davies P."/>
            <person name="de Pablos B."/>
            <person name="Delcher A."/>
            <person name="Deng Z."/>
            <person name="Mays A.D."/>
            <person name="Dew I."/>
            <person name="Dietz S.M."/>
            <person name="Dodson K."/>
            <person name="Doup L.E."/>
            <person name="Downes M."/>
            <person name="Dugan-Rocha S."/>
            <person name="Dunkov B.C."/>
            <person name="Dunn P."/>
            <person name="Durbin K.J."/>
            <person name="Evangelista C.C."/>
            <person name="Ferraz C."/>
            <person name="Ferriera S."/>
            <person name="Fleischmann W."/>
            <person name="Fosler C."/>
            <person name="Gabrielian A.E."/>
            <person name="Garg N.S."/>
            <person name="Gelbart W.M."/>
            <person name="Glasser K."/>
            <person name="Glodek A."/>
            <person name="Gong F."/>
            <person name="Gorrell J.H."/>
            <person name="Gu Z."/>
            <person name="Guan P."/>
            <person name="Harris M."/>
            <person name="Harris N.L."/>
            <person name="Harvey D.A."/>
            <person name="Heiman T.J."/>
            <person name="Hernandez J.R."/>
            <person name="Houck J."/>
            <person name="Hostin D."/>
            <person name="Houston K.A."/>
            <person name="Howland T.J."/>
            <person name="Wei M.-H."/>
            <person name="Ibegwam C."/>
            <person name="Jalali M."/>
            <person name="Kalush F."/>
            <person name="Karpen G.H."/>
            <person name="Ke Z."/>
            <person name="Kennison J.A."/>
            <person name="Ketchum K.A."/>
            <person name="Kimmel B.E."/>
            <person name="Kodira C.D."/>
            <person name="Kraft C.L."/>
            <person name="Kravitz S."/>
            <person name="Kulp D."/>
            <person name="Lai Z."/>
            <person name="Lasko P."/>
            <person name="Lei Y."/>
            <person name="Levitsky A.A."/>
            <person name="Li J.H."/>
            <person name="Li Z."/>
            <person name="Liang Y."/>
            <person name="Lin X."/>
            <person name="Liu X."/>
            <person name="Mattei B."/>
            <person name="McIntosh T.C."/>
            <person name="McLeod M.P."/>
            <person name="McPherson D."/>
            <person name="Merkulov G."/>
            <person name="Milshina N.V."/>
            <person name="Mobarry C."/>
            <person name="Morris J."/>
            <person name="Moshrefi A."/>
            <person name="Mount S.M."/>
            <person name="Moy M."/>
            <person name="Murphy B."/>
            <person name="Murphy L."/>
            <person name="Muzny D.M."/>
            <person name="Nelson D.L."/>
            <person name="Nelson D.R."/>
            <person name="Nelson K.A."/>
            <person name="Nixon K."/>
            <person name="Nusskern D.R."/>
            <person name="Pacleb J.M."/>
            <person name="Palazzolo M."/>
            <person name="Pittman G.S."/>
            <person name="Pan S."/>
            <person name="Pollard J."/>
            <person name="Puri V."/>
            <person name="Reese M.G."/>
            <person name="Reinert K."/>
            <person name="Remington K."/>
            <person name="Saunders R.D.C."/>
            <person name="Scheeler F."/>
            <person name="Shen H."/>
            <person name="Shue B.C."/>
            <person name="Siden-Kiamos I."/>
            <person name="Simpson M."/>
            <person name="Skupski M.P."/>
            <person name="Smith T.J."/>
            <person name="Spier E."/>
            <person name="Spradling A.C."/>
            <person name="Stapleton M."/>
            <person name="Strong R."/>
            <person name="Sun E."/>
            <person name="Svirskas R."/>
            <person name="Tector C."/>
            <person name="Turner R."/>
            <person name="Venter E."/>
            <person name="Wang A.H."/>
            <person name="Wang X."/>
            <person name="Wang Z.-Y."/>
            <person name="Wassarman D.A."/>
            <person name="Weinstock G.M."/>
            <person name="Weissenbach J."/>
            <person name="Williams S.M."/>
            <person name="Woodage T."/>
            <person name="Worley K.C."/>
            <person name="Wu D."/>
            <person name="Yang S."/>
            <person name="Yao Q.A."/>
            <person name="Ye J."/>
            <person name="Yeh R.-F."/>
            <person name="Zaveri J.S."/>
            <person name="Zhan M."/>
            <person name="Zhang G."/>
            <person name="Zhao Q."/>
            <person name="Zheng L."/>
            <person name="Zheng X.H."/>
            <person name="Zhong F.N."/>
            <person name="Zhong W."/>
            <person name="Zhou X."/>
            <person name="Zhu S.C."/>
            <person name="Zhu X."/>
            <person name="Smith H.O."/>
            <person name="Gibbs R.A."/>
            <person name="Myers E.W."/>
            <person name="Rubin G.M."/>
            <person name="Venter J.C."/>
        </authorList>
    </citation>
    <scope>NUCLEOTIDE SEQUENCE [LARGE SCALE GENOMIC DNA]</scope>
    <source>
        <strain evidence="7">Berkeley</strain>
    </source>
</reference>
<reference evidence="7" key="3">
    <citation type="journal article" date="2002" name="Genome Biol.">
        <title>Annotation of the Drosophila melanogaster euchromatic genome: a systematic review.</title>
        <authorList>
            <person name="Misra S."/>
            <person name="Crosby M.A."/>
            <person name="Mungall C.J."/>
            <person name="Matthews B.B."/>
            <person name="Campbell K.S."/>
            <person name="Hradecky P."/>
            <person name="Huang Y."/>
            <person name="Kaminker J.S."/>
            <person name="Millburn G.H."/>
            <person name="Prochnik S.E."/>
            <person name="Smith C.D."/>
            <person name="Tupy J.L."/>
            <person name="Whitfield E.J."/>
            <person name="Bayraktaroglu L."/>
            <person name="Berman B.P."/>
            <person name="Bettencourt B.R."/>
            <person name="Celniker S.E."/>
            <person name="de Grey A.D.N.J."/>
            <person name="Drysdale R.A."/>
            <person name="Harris N.L."/>
            <person name="Richter J."/>
            <person name="Russo S."/>
            <person name="Schroeder A.J."/>
            <person name="Shu S.Q."/>
            <person name="Stapleton M."/>
            <person name="Yamada C."/>
            <person name="Ashburner M."/>
            <person name="Gelbart W.M."/>
            <person name="Rubin G.M."/>
            <person name="Lewis S.E."/>
        </authorList>
    </citation>
    <scope>GENOME REANNOTATION</scope>
    <source>
        <strain evidence="7">Berkeley</strain>
    </source>
</reference>
<reference evidence="4" key="4">
    <citation type="submission" date="2004-08" db="EMBL/GenBank/DDBJ databases">
        <authorList>
            <person name="Stapleton M."/>
            <person name="Carlson J."/>
            <person name="Chavez C."/>
            <person name="Frise E."/>
            <person name="George R."/>
            <person name="Pacleb J."/>
            <person name="Park S."/>
            <person name="Wan K."/>
            <person name="Yu C."/>
            <person name="Rubin G.M."/>
            <person name="Celniker S."/>
        </authorList>
    </citation>
    <scope>NUCLEOTIDE SEQUENCE [LARGE SCALE MRNA]</scope>
    <source>
        <strain evidence="4">Berkeley</strain>
    </source>
</reference>
<reference key="5">
    <citation type="journal article" date="2014" name="J. Med. Invest.">
        <title>Adenylate kinase 2 deficiency limits survival and regulates various genes during larval stages of Drosophila melanogaster.</title>
        <authorList>
            <person name="Horiguchi T."/>
            <person name="Fuka M."/>
            <person name="Fujisawa K."/>
            <person name="Tanimura A."/>
            <person name="Miyoshi K."/>
            <person name="Murakami R."/>
            <person name="Noma T."/>
        </authorList>
    </citation>
    <scope>DISRUPTION PHENOTYPE</scope>
</reference>
<dbReference type="EC" id="2.7.4.10" evidence="1 2"/>
<dbReference type="EMBL" id="AB050622">
    <property type="protein sequence ID" value="BAB44152.1"/>
    <property type="molecule type" value="mRNA"/>
</dbReference>
<dbReference type="EMBL" id="AE014297">
    <property type="protein sequence ID" value="AAF54578.1"/>
    <property type="molecule type" value="Genomic_DNA"/>
</dbReference>
<dbReference type="EMBL" id="AE014297">
    <property type="protein sequence ID" value="AAN13494.1"/>
    <property type="molecule type" value="Genomic_DNA"/>
</dbReference>
<dbReference type="EMBL" id="AE014297">
    <property type="protein sequence ID" value="AHN57278.1"/>
    <property type="molecule type" value="Genomic_DNA"/>
</dbReference>
<dbReference type="EMBL" id="AE014297">
    <property type="protein sequence ID" value="AHN57279.1"/>
    <property type="molecule type" value="Genomic_DNA"/>
</dbReference>
<dbReference type="EMBL" id="BT015244">
    <property type="protein sequence ID" value="AAT94473.1"/>
    <property type="molecule type" value="mRNA"/>
</dbReference>
<dbReference type="RefSeq" id="NP_001287279.1">
    <property type="nucleotide sequence ID" value="NM_001300350.1"/>
</dbReference>
<dbReference type="RefSeq" id="NP_001287280.1">
    <property type="nucleotide sequence ID" value="NM_001300351.1"/>
</dbReference>
<dbReference type="RefSeq" id="NP_524312.1">
    <property type="nucleotide sequence ID" value="NM_079588.3"/>
</dbReference>
<dbReference type="RefSeq" id="NP_731529.1">
    <property type="nucleotide sequence ID" value="NM_169373.2"/>
</dbReference>
<dbReference type="SMR" id="Q9VGU6"/>
<dbReference type="FunCoup" id="Q9VGU6">
    <property type="interactions" value="1011"/>
</dbReference>
<dbReference type="IntAct" id="Q9VGU6">
    <property type="interactions" value="5"/>
</dbReference>
<dbReference type="STRING" id="7227.FBpp0308469"/>
<dbReference type="SwissPalm" id="Q9VGU6"/>
<dbReference type="PaxDb" id="7227-FBpp0081807"/>
<dbReference type="DNASU" id="41318"/>
<dbReference type="EnsemblMetazoa" id="FBtr0082330">
    <property type="protein sequence ID" value="FBpp0081806"/>
    <property type="gene ID" value="FBgn0042094"/>
</dbReference>
<dbReference type="EnsemblMetazoa" id="FBtr0082331">
    <property type="protein sequence ID" value="FBpp0081807"/>
    <property type="gene ID" value="FBgn0042094"/>
</dbReference>
<dbReference type="EnsemblMetazoa" id="FBtr0339378">
    <property type="protein sequence ID" value="FBpp0308469"/>
    <property type="gene ID" value="FBgn0042094"/>
</dbReference>
<dbReference type="EnsemblMetazoa" id="FBtr0339379">
    <property type="protein sequence ID" value="FBpp0308470"/>
    <property type="gene ID" value="FBgn0042094"/>
</dbReference>
<dbReference type="GeneID" id="41318"/>
<dbReference type="KEGG" id="dme:Dmel_CG6612"/>
<dbReference type="UCSC" id="CG6612-RA">
    <property type="organism name" value="d. melanogaster"/>
</dbReference>
<dbReference type="AGR" id="FB:FBgn0042094"/>
<dbReference type="CTD" id="50808"/>
<dbReference type="FlyBase" id="FBgn0042094">
    <property type="gene designation" value="Ak3"/>
</dbReference>
<dbReference type="VEuPathDB" id="VectorBase:FBgn0042094"/>
<dbReference type="eggNOG" id="KOG3078">
    <property type="taxonomic scope" value="Eukaryota"/>
</dbReference>
<dbReference type="GeneTree" id="ENSGT00940000155120"/>
<dbReference type="HOGENOM" id="CLU_032354_1_1_1"/>
<dbReference type="InParanoid" id="Q9VGU6"/>
<dbReference type="OMA" id="TIAHFST"/>
<dbReference type="OrthoDB" id="439792at2759"/>
<dbReference type="Reactome" id="R-DME-499943">
    <property type="pathway name" value="Interconversion of nucleotide di- and triphosphates"/>
</dbReference>
<dbReference type="Reactome" id="R-DME-983231">
    <property type="pathway name" value="Factors involved in megakaryocyte development and platelet production"/>
</dbReference>
<dbReference type="BioGRID-ORCS" id="41318">
    <property type="hits" value="0 hits in 3 CRISPR screens"/>
</dbReference>
<dbReference type="Proteomes" id="UP000000803">
    <property type="component" value="Chromosome 3R"/>
</dbReference>
<dbReference type="Bgee" id="FBgn0042094">
    <property type="expression patterns" value="Expressed in early elongation stage spermatid (Drosophila) in testis and 95 other cell types or tissues"/>
</dbReference>
<dbReference type="GO" id="GO:0005737">
    <property type="term" value="C:cytoplasm"/>
    <property type="evidence" value="ECO:0000318"/>
    <property type="project" value="GO_Central"/>
</dbReference>
<dbReference type="GO" id="GO:0005759">
    <property type="term" value="C:mitochondrial matrix"/>
    <property type="evidence" value="ECO:0000250"/>
    <property type="project" value="FlyBase"/>
</dbReference>
<dbReference type="GO" id="GO:0005739">
    <property type="term" value="C:mitochondrion"/>
    <property type="evidence" value="ECO:0007005"/>
    <property type="project" value="FlyBase"/>
</dbReference>
<dbReference type="GO" id="GO:0004017">
    <property type="term" value="F:adenylate kinase activity"/>
    <property type="evidence" value="ECO:0000314"/>
    <property type="project" value="FlyBase"/>
</dbReference>
<dbReference type="GO" id="GO:0005524">
    <property type="term" value="F:ATP binding"/>
    <property type="evidence" value="ECO:0007669"/>
    <property type="project" value="InterPro"/>
</dbReference>
<dbReference type="GO" id="GO:0005525">
    <property type="term" value="F:GTP binding"/>
    <property type="evidence" value="ECO:0007669"/>
    <property type="project" value="UniProtKB-KW"/>
</dbReference>
<dbReference type="GO" id="GO:0046899">
    <property type="term" value="F:nucleoside triphosphate adenylate kinase activity"/>
    <property type="evidence" value="ECO:0000318"/>
    <property type="project" value="GO_Central"/>
</dbReference>
<dbReference type="GO" id="GO:0006172">
    <property type="term" value="P:ADP biosynthetic process"/>
    <property type="evidence" value="ECO:0000250"/>
    <property type="project" value="FlyBase"/>
</dbReference>
<dbReference type="GO" id="GO:0046033">
    <property type="term" value="P:AMP metabolic process"/>
    <property type="evidence" value="ECO:0000318"/>
    <property type="project" value="GO_Central"/>
</dbReference>
<dbReference type="GO" id="GO:0046039">
    <property type="term" value="P:GTP metabolic process"/>
    <property type="evidence" value="ECO:0007669"/>
    <property type="project" value="UniProtKB-UniRule"/>
</dbReference>
<dbReference type="GO" id="GO:0046041">
    <property type="term" value="P:ITP metabolic process"/>
    <property type="evidence" value="ECO:0007669"/>
    <property type="project" value="UniProtKB-UniRule"/>
</dbReference>
<dbReference type="GO" id="GO:0009142">
    <property type="term" value="P:nucleoside triphosphate biosynthetic process"/>
    <property type="evidence" value="ECO:0000318"/>
    <property type="project" value="GO_Central"/>
</dbReference>
<dbReference type="CDD" id="cd01428">
    <property type="entry name" value="ADK"/>
    <property type="match status" value="1"/>
</dbReference>
<dbReference type="FunFam" id="3.40.50.300:FF:000106">
    <property type="entry name" value="Adenylate kinase mitochondrial"/>
    <property type="match status" value="1"/>
</dbReference>
<dbReference type="Gene3D" id="3.40.50.300">
    <property type="entry name" value="P-loop containing nucleotide triphosphate hydrolases"/>
    <property type="match status" value="1"/>
</dbReference>
<dbReference type="HAMAP" id="MF_00235">
    <property type="entry name" value="Adenylate_kinase_Adk"/>
    <property type="match status" value="1"/>
</dbReference>
<dbReference type="HAMAP" id="MF_03169">
    <property type="entry name" value="Adenylate_kinase_AK3"/>
    <property type="match status" value="1"/>
</dbReference>
<dbReference type="InterPro" id="IPR006259">
    <property type="entry name" value="Adenyl_kin_sub"/>
</dbReference>
<dbReference type="InterPro" id="IPR000850">
    <property type="entry name" value="Adenylat/UMP-CMP_kin"/>
</dbReference>
<dbReference type="InterPro" id="IPR033690">
    <property type="entry name" value="Adenylat_kinase_CS"/>
</dbReference>
<dbReference type="InterPro" id="IPR007862">
    <property type="entry name" value="Adenylate_kinase_lid-dom"/>
</dbReference>
<dbReference type="InterPro" id="IPR036193">
    <property type="entry name" value="ADK_active_lid_dom_sf"/>
</dbReference>
<dbReference type="InterPro" id="IPR028586">
    <property type="entry name" value="AK3/Ak4_mitochondrial"/>
</dbReference>
<dbReference type="InterPro" id="IPR027417">
    <property type="entry name" value="P-loop_NTPase"/>
</dbReference>
<dbReference type="NCBIfam" id="TIGR01351">
    <property type="entry name" value="adk"/>
    <property type="match status" value="1"/>
</dbReference>
<dbReference type="PANTHER" id="PTHR23359">
    <property type="entry name" value="NUCLEOTIDE KINASE"/>
    <property type="match status" value="1"/>
</dbReference>
<dbReference type="Pfam" id="PF00406">
    <property type="entry name" value="ADK"/>
    <property type="match status" value="1"/>
</dbReference>
<dbReference type="Pfam" id="PF05191">
    <property type="entry name" value="ADK_lid"/>
    <property type="match status" value="1"/>
</dbReference>
<dbReference type="PRINTS" id="PR00094">
    <property type="entry name" value="ADENYLTKNASE"/>
</dbReference>
<dbReference type="SUPFAM" id="SSF57774">
    <property type="entry name" value="Microbial and mitochondrial ADK, insert 'zinc finger' domain"/>
    <property type="match status" value="1"/>
</dbReference>
<dbReference type="SUPFAM" id="SSF52540">
    <property type="entry name" value="P-loop containing nucleoside triphosphate hydrolases"/>
    <property type="match status" value="1"/>
</dbReference>
<dbReference type="PROSITE" id="PS00113">
    <property type="entry name" value="ADENYLATE_KINASE"/>
    <property type="match status" value="1"/>
</dbReference>
<comment type="function">
    <text evidence="1 2">Involved in maintaining the homeostasis of cellular nucleotides by catalyzing the interconversion of nucleoside phosphates. Has GTP:AMP phosphotransferase and ITP:AMP phosphotransferase activities.</text>
</comment>
<comment type="catalytic activity">
    <reaction evidence="1 2">
        <text>a ribonucleoside 5'-triphosphate + AMP = a ribonucleoside 5'-diphosphate + ADP</text>
        <dbReference type="Rhea" id="RHEA:13749"/>
        <dbReference type="ChEBI" id="CHEBI:57930"/>
        <dbReference type="ChEBI" id="CHEBI:61557"/>
        <dbReference type="ChEBI" id="CHEBI:456215"/>
        <dbReference type="ChEBI" id="CHEBI:456216"/>
        <dbReference type="EC" id="2.7.4.10"/>
    </reaction>
</comment>
<comment type="subunit">
    <text evidence="1">Monomer.</text>
</comment>
<comment type="subcellular location">
    <subcellularLocation>
        <location evidence="1">Mitochondrion matrix</location>
    </subcellularLocation>
</comment>
<comment type="tissue specificity">
    <text evidence="2">Ubiquitously expressed with highest levels expressed in the abdomen, suggesting a function in muscle tissues.</text>
</comment>
<comment type="developmental stage">
    <text evidence="2">Expressed in larvae and adults but at very low levels in embryos.</text>
</comment>
<comment type="domain">
    <text evidence="1">Consists of three domains, a large central CORE domain and two small peripheral domains, NMPbind and LID, which undergo movements during catalysis. The LID domain closes over the site of phosphoryl transfer upon GTP binding. Assembling and dissambling the active center during each catalytic cycle provides an effective means to prevent GTP hydrolysis.</text>
</comment>
<comment type="disruption phenotype">
    <text evidence="3">RNAi-mediated knockdown has no effect on viability.</text>
</comment>
<comment type="similarity">
    <text evidence="1">Belongs to the adenylate kinase family. AK3 subfamily.</text>
</comment>
<keyword id="KW-0342">GTP-binding</keyword>
<keyword id="KW-0418">Kinase</keyword>
<keyword id="KW-0496">Mitochondrion</keyword>
<keyword id="KW-0547">Nucleotide-binding</keyword>
<keyword id="KW-0597">Phosphoprotein</keyword>
<keyword id="KW-1185">Reference proteome</keyword>
<keyword id="KW-0808">Transferase</keyword>
<protein>
    <recommendedName>
        <fullName evidence="1">GTP:AMP phosphotransferase, mitochondrial</fullName>
        <ecNumber evidence="1 2">2.7.4.10</ecNumber>
    </recommendedName>
    <alternativeName>
        <fullName evidence="1 6">Adenylate kinase 3</fullName>
        <shortName evidence="1">AK 3</shortName>
    </alternativeName>
</protein>
<organism evidence="7">
    <name type="scientific">Drosophila melanogaster</name>
    <name type="common">Fruit fly</name>
    <dbReference type="NCBI Taxonomy" id="7227"/>
    <lineage>
        <taxon>Eukaryota</taxon>
        <taxon>Metazoa</taxon>
        <taxon>Ecdysozoa</taxon>
        <taxon>Arthropoda</taxon>
        <taxon>Hexapoda</taxon>
        <taxon>Insecta</taxon>
        <taxon>Pterygota</taxon>
        <taxon>Neoptera</taxon>
        <taxon>Endopterygota</taxon>
        <taxon>Diptera</taxon>
        <taxon>Brachycera</taxon>
        <taxon>Muscomorpha</taxon>
        <taxon>Ephydroidea</taxon>
        <taxon>Drosophilidae</taxon>
        <taxon>Drosophila</taxon>
        <taxon>Sophophora</taxon>
    </lineage>
</organism>
<proteinExistence type="evidence at protein level"/>
<gene>
    <name evidence="6" type="primary">Ak3</name>
    <name evidence="1 6" type="synonym">Adk3</name>
    <name evidence="6" type="synonym">Dak3</name>
    <name evidence="6" type="ORF">CG6612</name>
</gene>
<accession>Q9VGU6</accession>